<accession>Q43593</accession>
<dbReference type="EC" id="1.14.19.2" evidence="2"/>
<dbReference type="EMBL" id="U58141">
    <property type="protein sequence ID" value="AAB67840.1"/>
    <property type="molecule type" value="mRNA"/>
</dbReference>
<dbReference type="SMR" id="Q43593"/>
<dbReference type="UniPathway" id="UPA00199"/>
<dbReference type="GO" id="GO:0009570">
    <property type="term" value="C:chloroplast stroma"/>
    <property type="evidence" value="ECO:0007669"/>
    <property type="project" value="TreeGrafter"/>
</dbReference>
<dbReference type="GO" id="GO:0046872">
    <property type="term" value="F:metal ion binding"/>
    <property type="evidence" value="ECO:0007669"/>
    <property type="project" value="UniProtKB-KW"/>
</dbReference>
<dbReference type="GO" id="GO:0045300">
    <property type="term" value="F:stearoyl-[ACP] desaturase activity"/>
    <property type="evidence" value="ECO:0007669"/>
    <property type="project" value="UniProtKB-EC"/>
</dbReference>
<dbReference type="GO" id="GO:0006633">
    <property type="term" value="P:fatty acid biosynthetic process"/>
    <property type="evidence" value="ECO:0007669"/>
    <property type="project" value="UniProtKB-KW"/>
</dbReference>
<dbReference type="CDD" id="cd01050">
    <property type="entry name" value="Acyl_ACP_Desat"/>
    <property type="match status" value="1"/>
</dbReference>
<dbReference type="FunFam" id="1.10.620.20:FF:000002">
    <property type="entry name" value="Stearoyl-[acyl-carrier-protein] 9-desaturase, chloroplastic"/>
    <property type="match status" value="1"/>
</dbReference>
<dbReference type="Gene3D" id="1.10.620.20">
    <property type="entry name" value="Ribonucleotide Reductase, subunit A"/>
    <property type="match status" value="1"/>
</dbReference>
<dbReference type="InterPro" id="IPR005803">
    <property type="entry name" value="FADS-2_CS"/>
</dbReference>
<dbReference type="InterPro" id="IPR005067">
    <property type="entry name" value="Fatty_acid_desaturase-2"/>
</dbReference>
<dbReference type="InterPro" id="IPR009078">
    <property type="entry name" value="Ferritin-like_SF"/>
</dbReference>
<dbReference type="InterPro" id="IPR012348">
    <property type="entry name" value="RNR-like"/>
</dbReference>
<dbReference type="PANTHER" id="PTHR31155">
    <property type="entry name" value="ACYL- ACYL-CARRIER-PROTEIN DESATURASE-RELATED"/>
    <property type="match status" value="1"/>
</dbReference>
<dbReference type="PANTHER" id="PTHR31155:SF27">
    <property type="entry name" value="STEAROYL-[ACYL-CARRIER-PROTEIN] 9-DESATURASE 5, CHLOROPLASTIC"/>
    <property type="match status" value="1"/>
</dbReference>
<dbReference type="Pfam" id="PF03405">
    <property type="entry name" value="FA_desaturase_2"/>
    <property type="match status" value="1"/>
</dbReference>
<dbReference type="PIRSF" id="PIRSF000346">
    <property type="entry name" value="Dlt9_acylACP_des"/>
    <property type="match status" value="1"/>
</dbReference>
<dbReference type="SUPFAM" id="SSF47240">
    <property type="entry name" value="Ferritin-like"/>
    <property type="match status" value="1"/>
</dbReference>
<dbReference type="PROSITE" id="PS00574">
    <property type="entry name" value="FATTY_ACID_DESATUR_2"/>
    <property type="match status" value="1"/>
</dbReference>
<sequence length="390" mass="44596">MALKLCFPPHKMPSFPDARIRSHRVFMASTIHSPSMEVGKVKKPFTPPREVHVQVTHSLAPEKREIFNSLNNWAQENILVLLKDVDKCWQPSDFLPDSASEGFDEQVMELRKRCKEIPDDYFIVLVGDMITEEALPTYQTMLNTLDGVRDETGASLTPWAIWTRAWTAEENRHGDLLNKYLYLSGRVDMKQIEKTIQYLIGSGMDPRTENNPYLGFIYTSFQERATFISHGNTARLAKEHGDLKLAQICGIIAADEKRHETAYTKIVEKLFEIDPDGTVLALADMMRKKVSMPAHLMYDGQDDNLFENFSSVAQRLGVYTAKDYADILEFLVGRWDIEKLTGLSGEGRKAQDYVCTLPPRIRRLEERAQSRVKKASATPFSWIFGREINL</sequence>
<protein>
    <recommendedName>
        <fullName>Stearoyl-[acyl-carrier-protein] 9-desaturase, chloroplastic</fullName>
        <shortName>Stearoyl-ACP desaturase</shortName>
        <ecNumber evidence="2">1.14.19.2</ecNumber>
    </recommendedName>
    <alternativeName>
        <fullName>Acyl-[acyl-carrier-protein] desaturase</fullName>
    </alternativeName>
</protein>
<organism>
    <name type="scientific">Olea europaea</name>
    <name type="common">Common olive</name>
    <dbReference type="NCBI Taxonomy" id="4146"/>
    <lineage>
        <taxon>Eukaryota</taxon>
        <taxon>Viridiplantae</taxon>
        <taxon>Streptophyta</taxon>
        <taxon>Embryophyta</taxon>
        <taxon>Tracheophyta</taxon>
        <taxon>Spermatophyta</taxon>
        <taxon>Magnoliopsida</taxon>
        <taxon>eudicotyledons</taxon>
        <taxon>Gunneridae</taxon>
        <taxon>Pentapetalae</taxon>
        <taxon>asterids</taxon>
        <taxon>lamiids</taxon>
        <taxon>Lamiales</taxon>
        <taxon>Oleaceae</taxon>
        <taxon>Oleeae</taxon>
        <taxon>Olea</taxon>
    </lineage>
</organism>
<proteinExistence type="evidence at transcript level"/>
<keyword id="KW-0150">Chloroplast</keyword>
<keyword id="KW-0275">Fatty acid biosynthesis</keyword>
<keyword id="KW-0276">Fatty acid metabolism</keyword>
<keyword id="KW-0408">Iron</keyword>
<keyword id="KW-0444">Lipid biosynthesis</keyword>
<keyword id="KW-0443">Lipid metabolism</keyword>
<keyword id="KW-0479">Metal-binding</keyword>
<keyword id="KW-0560">Oxidoreductase</keyword>
<keyword id="KW-0934">Plastid</keyword>
<keyword id="KW-0809">Transit peptide</keyword>
<name>STAD_OLEEU</name>
<evidence type="ECO:0000250" key="1">
    <source>
        <dbReference type="UniProtKB" id="P22243"/>
    </source>
</evidence>
<evidence type="ECO:0000250" key="2">
    <source>
        <dbReference type="UniProtKB" id="P22337"/>
    </source>
</evidence>
<evidence type="ECO:0000305" key="3"/>
<comment type="function">
    <text evidence="2">Converts stearoyl-ACP to oleoyl-ACP by introduction of a cis double bond between carbons 9 and 10 of the acyl chain.</text>
</comment>
<comment type="catalytic activity">
    <reaction evidence="2">
        <text>octadecanoyl-[ACP] + 2 reduced [2Fe-2S]-[ferredoxin] + O2 + 2 H(+) = (9Z)-octadecenoyl-[ACP] + 2 oxidized [2Fe-2S]-[ferredoxin] + 2 H2O</text>
        <dbReference type="Rhea" id="RHEA:11776"/>
        <dbReference type="Rhea" id="RHEA-COMP:9656"/>
        <dbReference type="Rhea" id="RHEA-COMP:9924"/>
        <dbReference type="Rhea" id="RHEA-COMP:10000"/>
        <dbReference type="Rhea" id="RHEA-COMP:10001"/>
        <dbReference type="ChEBI" id="CHEBI:15377"/>
        <dbReference type="ChEBI" id="CHEBI:15378"/>
        <dbReference type="ChEBI" id="CHEBI:15379"/>
        <dbReference type="ChEBI" id="CHEBI:33737"/>
        <dbReference type="ChEBI" id="CHEBI:33738"/>
        <dbReference type="ChEBI" id="CHEBI:78495"/>
        <dbReference type="ChEBI" id="CHEBI:78783"/>
        <dbReference type="EC" id="1.14.19.2"/>
    </reaction>
</comment>
<comment type="cofactor">
    <cofactor evidence="2">
        <name>Fe(2+)</name>
        <dbReference type="ChEBI" id="CHEBI:29033"/>
    </cofactor>
    <text evidence="2">Binds 2 Fe(2+) ions per subunit.</text>
</comment>
<comment type="pathway">
    <text>Lipid metabolism; fatty acid metabolism.</text>
</comment>
<comment type="subunit">
    <text evidence="2">Homodimer.</text>
</comment>
<comment type="subcellular location">
    <subcellularLocation>
        <location evidence="2">Plastid</location>
        <location evidence="2">Chloroplast</location>
    </subcellularLocation>
    <subcellularLocation>
        <location evidence="2">Plastid</location>
    </subcellularLocation>
    <text>In green tissue, found in chloroplasts. In non-photosynthetic tissue, found in plastids.</text>
</comment>
<comment type="similarity">
    <text evidence="3">Belongs to the fatty acid desaturase type 2 family.</text>
</comment>
<feature type="transit peptide" description="Chloroplast" evidence="1">
    <location>
        <begin position="1"/>
        <end position="27"/>
    </location>
</feature>
<feature type="chain" id="PRO_0000007135" description="Stearoyl-[acyl-carrier-protein] 9-desaturase, chloroplastic">
    <location>
        <begin position="28"/>
        <end position="390"/>
    </location>
</feature>
<feature type="binding site" evidence="2">
    <location>
        <position position="132"/>
    </location>
    <ligand>
        <name>Fe cation</name>
        <dbReference type="ChEBI" id="CHEBI:24875"/>
        <label>1</label>
    </ligand>
</feature>
<feature type="binding site" evidence="2">
    <location>
        <position position="170"/>
    </location>
    <ligand>
        <name>Fe cation</name>
        <dbReference type="ChEBI" id="CHEBI:24875"/>
        <label>1</label>
    </ligand>
</feature>
<feature type="binding site" evidence="2">
    <location>
        <position position="170"/>
    </location>
    <ligand>
        <name>Fe cation</name>
        <dbReference type="ChEBI" id="CHEBI:24875"/>
        <label>2</label>
    </ligand>
</feature>
<feature type="binding site" evidence="2">
    <location>
        <position position="173"/>
    </location>
    <ligand>
        <name>Fe cation</name>
        <dbReference type="ChEBI" id="CHEBI:24875"/>
        <label>1</label>
    </ligand>
</feature>
<feature type="binding site" evidence="2">
    <location>
        <position position="223"/>
    </location>
    <ligand>
        <name>Fe cation</name>
        <dbReference type="ChEBI" id="CHEBI:24875"/>
        <label>2</label>
    </ligand>
</feature>
<feature type="binding site" evidence="2">
    <location>
        <position position="256"/>
    </location>
    <ligand>
        <name>Fe cation</name>
        <dbReference type="ChEBI" id="CHEBI:24875"/>
        <label>1</label>
    </ligand>
</feature>
<feature type="binding site" evidence="2">
    <location>
        <position position="256"/>
    </location>
    <ligand>
        <name>Fe cation</name>
        <dbReference type="ChEBI" id="CHEBI:24875"/>
        <label>2</label>
    </ligand>
</feature>
<feature type="binding site" evidence="2">
    <location>
        <position position="259"/>
    </location>
    <ligand>
        <name>Fe cation</name>
        <dbReference type="ChEBI" id="CHEBI:24875"/>
        <label>2</label>
    </ligand>
</feature>
<reference key="1">
    <citation type="online journal article" date="1996" name="Plant Gene Register">
        <title>Nucleotide sequence of a cDNA clone from Olea europaea encoding a stearoyl-acyl carrier protein desaturase.</title>
        <authorList>
            <person name="Baldoni L."/>
            <person name="Georgi L."/>
            <person name="Abbott A.G."/>
        </authorList>
        <locator>PGR96-052</locator>
    </citation>
    <scope>NUCLEOTIDE SEQUENCE [MRNA]</scope>
    <source>
        <strain>cv. Leccino</strain>
        <tissue>Mesocarp</tissue>
    </source>
</reference>